<gene>
    <name evidence="1" type="primary">tgt</name>
    <name type="ordered locus">MS1559</name>
</gene>
<protein>
    <recommendedName>
        <fullName evidence="1">Queuine tRNA-ribosyltransferase</fullName>
        <ecNumber evidence="1">2.4.2.29</ecNumber>
    </recommendedName>
    <alternativeName>
        <fullName evidence="1">Guanine insertion enzyme</fullName>
    </alternativeName>
    <alternativeName>
        <fullName evidence="1">tRNA-guanine transglycosylase</fullName>
    </alternativeName>
</protein>
<keyword id="KW-0328">Glycosyltransferase</keyword>
<keyword id="KW-0479">Metal-binding</keyword>
<keyword id="KW-0671">Queuosine biosynthesis</keyword>
<keyword id="KW-0808">Transferase</keyword>
<keyword id="KW-0819">tRNA processing</keyword>
<keyword id="KW-0862">Zinc</keyword>
<accession>Q65S94</accession>
<sequence>MKFKLKTTSGAARRGELTFNRPQGEFSVQTPAFMPVGTYGTVKGMTPEEVRATGAEILLGNTFHLWLRPGQEVMRKHGDLHDFMQWHRPILTDSGGFQVFSLGKLRKITEEGVKFQNPINGERIFLSPEKSMEIQYDLGSDIVMIFDECTPYPATFDYAKKSMEMSLRWAKRSRDRFDELGNKNALFGIVQGGTFEELRKVSAENLINIGFDGYAVGGLAVGEPKEEMHRILEFTTPLLPADKPRYLMGVGKPEDLVEGVRRGIDMFDCVMPTRNARNGHLFVTDGIVKIRNAKYKDDTSPLDPHCDCYTCQHYTKSYLYHLDKCGEILGARLNTIHNLRYYQRLMEQIRTAIEQDRFDDFVQEFYARMDKPVPPLQKA</sequence>
<evidence type="ECO:0000255" key="1">
    <source>
        <dbReference type="HAMAP-Rule" id="MF_00168"/>
    </source>
</evidence>
<name>TGT_MANSM</name>
<organism>
    <name type="scientific">Mannheimia succiniciproducens (strain KCTC 0769BP / MBEL55E)</name>
    <dbReference type="NCBI Taxonomy" id="221988"/>
    <lineage>
        <taxon>Bacteria</taxon>
        <taxon>Pseudomonadati</taxon>
        <taxon>Pseudomonadota</taxon>
        <taxon>Gammaproteobacteria</taxon>
        <taxon>Pasteurellales</taxon>
        <taxon>Pasteurellaceae</taxon>
        <taxon>Basfia</taxon>
    </lineage>
</organism>
<comment type="function">
    <text evidence="1">Catalyzes the base-exchange of a guanine (G) residue with the queuine precursor 7-aminomethyl-7-deazaguanine (PreQ1) at position 34 (anticodon wobble position) in tRNAs with GU(N) anticodons (tRNA-Asp, -Asn, -His and -Tyr). Catalysis occurs through a double-displacement mechanism. The nucleophile active site attacks the C1' of nucleotide 34 to detach the guanine base from the RNA, forming a covalent enzyme-RNA intermediate. The proton acceptor active site deprotonates the incoming PreQ1, allowing a nucleophilic attack on the C1' of the ribose to form the product. After dissociation, two additional enzymatic reactions on the tRNA convert PreQ1 to queuine (Q), resulting in the hypermodified nucleoside queuosine (7-(((4,5-cis-dihydroxy-2-cyclopenten-1-yl)amino)methyl)-7-deazaguanosine).</text>
</comment>
<comment type="catalytic activity">
    <reaction evidence="1">
        <text>7-aminomethyl-7-carbaguanine + guanosine(34) in tRNA = 7-aminomethyl-7-carbaguanosine(34) in tRNA + guanine</text>
        <dbReference type="Rhea" id="RHEA:24104"/>
        <dbReference type="Rhea" id="RHEA-COMP:10341"/>
        <dbReference type="Rhea" id="RHEA-COMP:10342"/>
        <dbReference type="ChEBI" id="CHEBI:16235"/>
        <dbReference type="ChEBI" id="CHEBI:58703"/>
        <dbReference type="ChEBI" id="CHEBI:74269"/>
        <dbReference type="ChEBI" id="CHEBI:82833"/>
        <dbReference type="EC" id="2.4.2.29"/>
    </reaction>
</comment>
<comment type="cofactor">
    <cofactor evidence="1">
        <name>Zn(2+)</name>
        <dbReference type="ChEBI" id="CHEBI:29105"/>
    </cofactor>
    <text evidence="1">Binds 1 zinc ion per subunit.</text>
</comment>
<comment type="pathway">
    <text evidence="1">tRNA modification; tRNA-queuosine biosynthesis.</text>
</comment>
<comment type="subunit">
    <text evidence="1">Homodimer. Within each dimer, one monomer is responsible for RNA recognition and catalysis, while the other monomer binds to the replacement base PreQ1.</text>
</comment>
<comment type="similarity">
    <text evidence="1">Belongs to the queuine tRNA-ribosyltransferase family.</text>
</comment>
<proteinExistence type="inferred from homology"/>
<feature type="chain" id="PRO_0000135493" description="Queuine tRNA-ribosyltransferase">
    <location>
        <begin position="1"/>
        <end position="379"/>
    </location>
</feature>
<feature type="region of interest" description="RNA binding" evidence="1">
    <location>
        <begin position="249"/>
        <end position="255"/>
    </location>
</feature>
<feature type="region of interest" description="RNA binding; important for wobble base 34 recognition" evidence="1">
    <location>
        <begin position="273"/>
        <end position="277"/>
    </location>
</feature>
<feature type="active site" description="Proton acceptor" evidence="1">
    <location>
        <position position="93"/>
    </location>
</feature>
<feature type="active site" description="Nucleophile" evidence="1">
    <location>
        <position position="268"/>
    </location>
</feature>
<feature type="binding site" evidence="1">
    <location>
        <begin position="93"/>
        <end position="97"/>
    </location>
    <ligand>
        <name>substrate</name>
    </ligand>
</feature>
<feature type="binding site" evidence="1">
    <location>
        <position position="147"/>
    </location>
    <ligand>
        <name>substrate</name>
    </ligand>
</feature>
<feature type="binding site" evidence="1">
    <location>
        <position position="191"/>
    </location>
    <ligand>
        <name>substrate</name>
    </ligand>
</feature>
<feature type="binding site" evidence="1">
    <location>
        <position position="218"/>
    </location>
    <ligand>
        <name>substrate</name>
    </ligand>
</feature>
<feature type="binding site" evidence="1">
    <location>
        <position position="306"/>
    </location>
    <ligand>
        <name>Zn(2+)</name>
        <dbReference type="ChEBI" id="CHEBI:29105"/>
    </ligand>
</feature>
<feature type="binding site" evidence="1">
    <location>
        <position position="308"/>
    </location>
    <ligand>
        <name>Zn(2+)</name>
        <dbReference type="ChEBI" id="CHEBI:29105"/>
    </ligand>
</feature>
<feature type="binding site" evidence="1">
    <location>
        <position position="311"/>
    </location>
    <ligand>
        <name>Zn(2+)</name>
        <dbReference type="ChEBI" id="CHEBI:29105"/>
    </ligand>
</feature>
<feature type="binding site" evidence="1">
    <location>
        <position position="337"/>
    </location>
    <ligand>
        <name>Zn(2+)</name>
        <dbReference type="ChEBI" id="CHEBI:29105"/>
    </ligand>
</feature>
<reference key="1">
    <citation type="journal article" date="2004" name="Nat. Biotechnol.">
        <title>The genome sequence of the capnophilic rumen bacterium Mannheimia succiniciproducens.</title>
        <authorList>
            <person name="Hong S.H."/>
            <person name="Kim J.S."/>
            <person name="Lee S.Y."/>
            <person name="In Y.H."/>
            <person name="Choi S.S."/>
            <person name="Rih J.-K."/>
            <person name="Kim C.H."/>
            <person name="Jeong H."/>
            <person name="Hur C.G."/>
            <person name="Kim J.J."/>
        </authorList>
    </citation>
    <scope>NUCLEOTIDE SEQUENCE [LARGE SCALE GENOMIC DNA]</scope>
    <source>
        <strain>KCTC 0769BP / MBEL55E</strain>
    </source>
</reference>
<dbReference type="EC" id="2.4.2.29" evidence="1"/>
<dbReference type="EMBL" id="AE016827">
    <property type="protein sequence ID" value="AAU38166.1"/>
    <property type="molecule type" value="Genomic_DNA"/>
</dbReference>
<dbReference type="RefSeq" id="WP_011200731.1">
    <property type="nucleotide sequence ID" value="NC_006300.1"/>
</dbReference>
<dbReference type="SMR" id="Q65S94"/>
<dbReference type="STRING" id="221988.MS1559"/>
<dbReference type="KEGG" id="msu:MS1559"/>
<dbReference type="eggNOG" id="COG0343">
    <property type="taxonomic scope" value="Bacteria"/>
</dbReference>
<dbReference type="HOGENOM" id="CLU_022060_0_1_6"/>
<dbReference type="OrthoDB" id="9805417at2"/>
<dbReference type="UniPathway" id="UPA00392"/>
<dbReference type="Proteomes" id="UP000000607">
    <property type="component" value="Chromosome"/>
</dbReference>
<dbReference type="GO" id="GO:0005829">
    <property type="term" value="C:cytosol"/>
    <property type="evidence" value="ECO:0007669"/>
    <property type="project" value="TreeGrafter"/>
</dbReference>
<dbReference type="GO" id="GO:0046872">
    <property type="term" value="F:metal ion binding"/>
    <property type="evidence" value="ECO:0007669"/>
    <property type="project" value="UniProtKB-KW"/>
</dbReference>
<dbReference type="GO" id="GO:0008479">
    <property type="term" value="F:tRNA-guanosine(34) queuine transglycosylase activity"/>
    <property type="evidence" value="ECO:0007669"/>
    <property type="project" value="UniProtKB-UniRule"/>
</dbReference>
<dbReference type="GO" id="GO:0008616">
    <property type="term" value="P:queuosine biosynthetic process"/>
    <property type="evidence" value="ECO:0007669"/>
    <property type="project" value="UniProtKB-UniRule"/>
</dbReference>
<dbReference type="GO" id="GO:0002099">
    <property type="term" value="P:tRNA wobble guanine modification"/>
    <property type="evidence" value="ECO:0007669"/>
    <property type="project" value="TreeGrafter"/>
</dbReference>
<dbReference type="GO" id="GO:0101030">
    <property type="term" value="P:tRNA-guanine transglycosylation"/>
    <property type="evidence" value="ECO:0007669"/>
    <property type="project" value="InterPro"/>
</dbReference>
<dbReference type="FunFam" id="3.20.20.105:FF:000001">
    <property type="entry name" value="Queuine tRNA-ribosyltransferase"/>
    <property type="match status" value="1"/>
</dbReference>
<dbReference type="Gene3D" id="3.20.20.105">
    <property type="entry name" value="Queuine tRNA-ribosyltransferase-like"/>
    <property type="match status" value="1"/>
</dbReference>
<dbReference type="HAMAP" id="MF_00168">
    <property type="entry name" value="Q_tRNA_Tgt"/>
    <property type="match status" value="1"/>
</dbReference>
<dbReference type="InterPro" id="IPR050076">
    <property type="entry name" value="ArchSynthase1/Queuine_TRR"/>
</dbReference>
<dbReference type="InterPro" id="IPR004803">
    <property type="entry name" value="TGT"/>
</dbReference>
<dbReference type="InterPro" id="IPR036511">
    <property type="entry name" value="TGT-like_sf"/>
</dbReference>
<dbReference type="InterPro" id="IPR002616">
    <property type="entry name" value="tRNA_ribo_trans-like"/>
</dbReference>
<dbReference type="NCBIfam" id="TIGR00430">
    <property type="entry name" value="Q_tRNA_tgt"/>
    <property type="match status" value="1"/>
</dbReference>
<dbReference type="NCBIfam" id="TIGR00449">
    <property type="entry name" value="tgt_general"/>
    <property type="match status" value="1"/>
</dbReference>
<dbReference type="PANTHER" id="PTHR46499">
    <property type="entry name" value="QUEUINE TRNA-RIBOSYLTRANSFERASE"/>
    <property type="match status" value="1"/>
</dbReference>
<dbReference type="PANTHER" id="PTHR46499:SF1">
    <property type="entry name" value="QUEUINE TRNA-RIBOSYLTRANSFERASE"/>
    <property type="match status" value="1"/>
</dbReference>
<dbReference type="Pfam" id="PF01702">
    <property type="entry name" value="TGT"/>
    <property type="match status" value="1"/>
</dbReference>
<dbReference type="SUPFAM" id="SSF51713">
    <property type="entry name" value="tRNA-guanine transglycosylase"/>
    <property type="match status" value="1"/>
</dbReference>